<evidence type="ECO:0000255" key="1">
    <source>
        <dbReference type="HAMAP-Rule" id="MF_00008"/>
    </source>
</evidence>
<protein>
    <recommendedName>
        <fullName evidence="1">Thymidylate synthase</fullName>
        <shortName evidence="1">TS</shortName>
        <shortName evidence="1">TSase</shortName>
        <ecNumber evidence="1">2.1.1.45</ecNumber>
    </recommendedName>
</protein>
<organism>
    <name type="scientific">Nocardia farcinica (strain IFM 10152)</name>
    <dbReference type="NCBI Taxonomy" id="247156"/>
    <lineage>
        <taxon>Bacteria</taxon>
        <taxon>Bacillati</taxon>
        <taxon>Actinomycetota</taxon>
        <taxon>Actinomycetes</taxon>
        <taxon>Mycobacteriales</taxon>
        <taxon>Nocardiaceae</taxon>
        <taxon>Nocardia</taxon>
    </lineage>
</organism>
<name>TYSY_NOCFA</name>
<comment type="function">
    <text evidence="1">Catalyzes the reductive methylation of 2'-deoxyuridine-5'-monophosphate (dUMP) to 2'-deoxythymidine-5'-monophosphate (dTMP) while utilizing 5,10-methylenetetrahydrofolate (mTHF) as the methyl donor and reductant in the reaction, yielding dihydrofolate (DHF) as a by-product. This enzymatic reaction provides an intracellular de novo source of dTMP, an essential precursor for DNA biosynthesis.</text>
</comment>
<comment type="catalytic activity">
    <reaction evidence="1">
        <text>dUMP + (6R)-5,10-methylene-5,6,7,8-tetrahydrofolate = 7,8-dihydrofolate + dTMP</text>
        <dbReference type="Rhea" id="RHEA:12104"/>
        <dbReference type="ChEBI" id="CHEBI:15636"/>
        <dbReference type="ChEBI" id="CHEBI:57451"/>
        <dbReference type="ChEBI" id="CHEBI:63528"/>
        <dbReference type="ChEBI" id="CHEBI:246422"/>
        <dbReference type="EC" id="2.1.1.45"/>
    </reaction>
</comment>
<comment type="pathway">
    <text evidence="1">Pyrimidine metabolism; dTTP biosynthesis.</text>
</comment>
<comment type="subunit">
    <text evidence="1">Homodimer.</text>
</comment>
<comment type="subcellular location">
    <subcellularLocation>
        <location evidence="1">Cytoplasm</location>
    </subcellularLocation>
</comment>
<comment type="similarity">
    <text evidence="1">Belongs to the thymidylate synthase family. Bacterial-type ThyA subfamily.</text>
</comment>
<feature type="chain" id="PRO_0000140996" description="Thymidylate synthase">
    <location>
        <begin position="1"/>
        <end position="266"/>
    </location>
</feature>
<feature type="active site" description="Nucleophile" evidence="1">
    <location>
        <position position="149"/>
    </location>
</feature>
<feature type="binding site" description="in other chain" evidence="1">
    <location>
        <position position="24"/>
    </location>
    <ligand>
        <name>dUMP</name>
        <dbReference type="ChEBI" id="CHEBI:246422"/>
        <note>ligand shared between dimeric partners</note>
    </ligand>
</feature>
<feature type="binding site" evidence="1">
    <location>
        <position position="54"/>
    </location>
    <ligand>
        <name>(6R)-5,10-methylene-5,6,7,8-tetrahydrofolate</name>
        <dbReference type="ChEBI" id="CHEBI:15636"/>
    </ligand>
</feature>
<feature type="binding site" evidence="1">
    <location>
        <begin position="129"/>
        <end position="130"/>
    </location>
    <ligand>
        <name>dUMP</name>
        <dbReference type="ChEBI" id="CHEBI:246422"/>
        <note>ligand shared between dimeric partners</note>
    </ligand>
</feature>
<feature type="binding site" description="in other chain" evidence="1">
    <location>
        <begin position="169"/>
        <end position="172"/>
    </location>
    <ligand>
        <name>dUMP</name>
        <dbReference type="ChEBI" id="CHEBI:246422"/>
        <note>ligand shared between dimeric partners</note>
    </ligand>
</feature>
<feature type="binding site" evidence="1">
    <location>
        <position position="172"/>
    </location>
    <ligand>
        <name>(6R)-5,10-methylene-5,6,7,8-tetrahydrofolate</name>
        <dbReference type="ChEBI" id="CHEBI:15636"/>
    </ligand>
</feature>
<feature type="binding site" description="in other chain" evidence="1">
    <location>
        <position position="180"/>
    </location>
    <ligand>
        <name>dUMP</name>
        <dbReference type="ChEBI" id="CHEBI:246422"/>
        <note>ligand shared between dimeric partners</note>
    </ligand>
</feature>
<feature type="binding site" description="in other chain" evidence="1">
    <location>
        <begin position="210"/>
        <end position="212"/>
    </location>
    <ligand>
        <name>dUMP</name>
        <dbReference type="ChEBI" id="CHEBI:246422"/>
        <note>ligand shared between dimeric partners</note>
    </ligand>
</feature>
<feature type="binding site" evidence="1">
    <location>
        <position position="265"/>
    </location>
    <ligand>
        <name>(6R)-5,10-methylene-5,6,7,8-tetrahydrofolate</name>
        <dbReference type="ChEBI" id="CHEBI:15636"/>
    </ligand>
</feature>
<accession>Q5YPL7</accession>
<proteinExistence type="inferred from homology"/>
<keyword id="KW-0963">Cytoplasm</keyword>
<keyword id="KW-0489">Methyltransferase</keyword>
<keyword id="KW-0545">Nucleotide biosynthesis</keyword>
<keyword id="KW-1185">Reference proteome</keyword>
<keyword id="KW-0808">Transferase</keyword>
<gene>
    <name evidence="1" type="primary">thyA</name>
    <name type="ordered locus">NFA_50220</name>
</gene>
<dbReference type="EC" id="2.1.1.45" evidence="1"/>
<dbReference type="EMBL" id="AP006618">
    <property type="protein sequence ID" value="BAD59874.1"/>
    <property type="molecule type" value="Genomic_DNA"/>
</dbReference>
<dbReference type="RefSeq" id="WP_011211557.1">
    <property type="nucleotide sequence ID" value="NC_006361.1"/>
</dbReference>
<dbReference type="SMR" id="Q5YPL7"/>
<dbReference type="STRING" id="247156.NFA_50220"/>
<dbReference type="GeneID" id="61135600"/>
<dbReference type="KEGG" id="nfa:NFA_50220"/>
<dbReference type="eggNOG" id="COG0207">
    <property type="taxonomic scope" value="Bacteria"/>
</dbReference>
<dbReference type="HOGENOM" id="CLU_021669_0_0_11"/>
<dbReference type="OrthoDB" id="9774633at2"/>
<dbReference type="UniPathway" id="UPA00575"/>
<dbReference type="Proteomes" id="UP000006820">
    <property type="component" value="Chromosome"/>
</dbReference>
<dbReference type="GO" id="GO:0005829">
    <property type="term" value="C:cytosol"/>
    <property type="evidence" value="ECO:0007669"/>
    <property type="project" value="TreeGrafter"/>
</dbReference>
<dbReference type="GO" id="GO:0004799">
    <property type="term" value="F:thymidylate synthase activity"/>
    <property type="evidence" value="ECO:0007669"/>
    <property type="project" value="UniProtKB-UniRule"/>
</dbReference>
<dbReference type="GO" id="GO:0006231">
    <property type="term" value="P:dTMP biosynthetic process"/>
    <property type="evidence" value="ECO:0007669"/>
    <property type="project" value="UniProtKB-UniRule"/>
</dbReference>
<dbReference type="GO" id="GO:0006235">
    <property type="term" value="P:dTTP biosynthetic process"/>
    <property type="evidence" value="ECO:0007669"/>
    <property type="project" value="UniProtKB-UniRule"/>
</dbReference>
<dbReference type="GO" id="GO:0032259">
    <property type="term" value="P:methylation"/>
    <property type="evidence" value="ECO:0007669"/>
    <property type="project" value="UniProtKB-KW"/>
</dbReference>
<dbReference type="CDD" id="cd00351">
    <property type="entry name" value="TS_Pyrimidine_HMase"/>
    <property type="match status" value="1"/>
</dbReference>
<dbReference type="FunFam" id="3.30.572.10:FF:000001">
    <property type="entry name" value="Thymidylate synthase"/>
    <property type="match status" value="1"/>
</dbReference>
<dbReference type="Gene3D" id="3.30.572.10">
    <property type="entry name" value="Thymidylate synthase/dCMP hydroxymethylase domain"/>
    <property type="match status" value="1"/>
</dbReference>
<dbReference type="HAMAP" id="MF_00008">
    <property type="entry name" value="Thymidy_synth_bact"/>
    <property type="match status" value="1"/>
</dbReference>
<dbReference type="InterPro" id="IPR045097">
    <property type="entry name" value="Thymidate_synth/dCMP_Mease"/>
</dbReference>
<dbReference type="InterPro" id="IPR023451">
    <property type="entry name" value="Thymidate_synth/dCMP_Mease_dom"/>
</dbReference>
<dbReference type="InterPro" id="IPR036926">
    <property type="entry name" value="Thymidate_synth/dCMP_Mease_sf"/>
</dbReference>
<dbReference type="InterPro" id="IPR000398">
    <property type="entry name" value="Thymidylate_synthase"/>
</dbReference>
<dbReference type="InterPro" id="IPR020940">
    <property type="entry name" value="Thymidylate_synthase_AS"/>
</dbReference>
<dbReference type="NCBIfam" id="NF002497">
    <property type="entry name" value="PRK01827.1-3"/>
    <property type="match status" value="1"/>
</dbReference>
<dbReference type="NCBIfam" id="NF002499">
    <property type="entry name" value="PRK01827.1-5"/>
    <property type="match status" value="1"/>
</dbReference>
<dbReference type="NCBIfam" id="TIGR03284">
    <property type="entry name" value="thym_sym"/>
    <property type="match status" value="2"/>
</dbReference>
<dbReference type="PANTHER" id="PTHR11548:SF9">
    <property type="entry name" value="THYMIDYLATE SYNTHASE"/>
    <property type="match status" value="1"/>
</dbReference>
<dbReference type="PANTHER" id="PTHR11548">
    <property type="entry name" value="THYMIDYLATE SYNTHASE 1"/>
    <property type="match status" value="1"/>
</dbReference>
<dbReference type="Pfam" id="PF00303">
    <property type="entry name" value="Thymidylat_synt"/>
    <property type="match status" value="1"/>
</dbReference>
<dbReference type="PRINTS" id="PR00108">
    <property type="entry name" value="THYMDSNTHASE"/>
</dbReference>
<dbReference type="SUPFAM" id="SSF55831">
    <property type="entry name" value="Thymidylate synthase/dCMP hydroxymethylase"/>
    <property type="match status" value="1"/>
</dbReference>
<dbReference type="PROSITE" id="PS00091">
    <property type="entry name" value="THYMIDYLATE_SYNTHASE"/>
    <property type="match status" value="1"/>
</dbReference>
<reference key="1">
    <citation type="journal article" date="2004" name="Proc. Natl. Acad. Sci. U.S.A.">
        <title>The complete genomic sequence of Nocardia farcinica IFM 10152.</title>
        <authorList>
            <person name="Ishikawa J."/>
            <person name="Yamashita A."/>
            <person name="Mikami Y."/>
            <person name="Hoshino Y."/>
            <person name="Kurita H."/>
            <person name="Hotta K."/>
            <person name="Shiba T."/>
            <person name="Hattori M."/>
        </authorList>
    </citation>
    <scope>NUCLEOTIDE SEQUENCE [LARGE SCALE GENOMIC DNA]</scope>
    <source>
        <strain>IFM 10152</strain>
    </source>
</reference>
<sequence length="266" mass="30394">MATDRQYEDLLRLVLDTGTAKGDRTGTGTRSIFGHQLRYDLSAGFPLITTKKVHLKSIVYELLWFLRGDSNVGWLREHGVTIWDEWADPQGELGPVYGVQWRSWPTPDGTHIDQISQVLQTLRTDPDSRRMIVSAWNVAELDRMALAPCHAFFQFYVADGKLSCQLYQRSADLFLGVPFNIASYALLTHMVAQQTELEPGEFIWTGGDCHIYDNHVEQVTEQLGREPYPFPRLELRPAPSLFDYRFEDVTVTDYRHHPAIKAPVAV</sequence>